<proteinExistence type="inferred from homology"/>
<keyword id="KW-0067">ATP-binding</keyword>
<keyword id="KW-0460">Magnesium</keyword>
<keyword id="KW-0547">Nucleotide-binding</keyword>
<keyword id="KW-0808">Transferase</keyword>
<keyword id="KW-0819">tRNA processing</keyword>
<reference key="1">
    <citation type="journal article" date="2006" name="Genome Biol.">
        <title>The genome of Rhizobium leguminosarum has recognizable core and accessory components.</title>
        <authorList>
            <person name="Young J.P.W."/>
            <person name="Crossman L.C."/>
            <person name="Johnston A.W.B."/>
            <person name="Thomson N.R."/>
            <person name="Ghazoui Z.F."/>
            <person name="Hull K.H."/>
            <person name="Wexler M."/>
            <person name="Curson A.R.J."/>
            <person name="Todd J.D."/>
            <person name="Poole P.S."/>
            <person name="Mauchline T.H."/>
            <person name="East A.K."/>
            <person name="Quail M.A."/>
            <person name="Churcher C."/>
            <person name="Arrowsmith C."/>
            <person name="Cherevach I."/>
            <person name="Chillingworth T."/>
            <person name="Clarke K."/>
            <person name="Cronin A."/>
            <person name="Davis P."/>
            <person name="Fraser A."/>
            <person name="Hance Z."/>
            <person name="Hauser H."/>
            <person name="Jagels K."/>
            <person name="Moule S."/>
            <person name="Mungall K."/>
            <person name="Norbertczak H."/>
            <person name="Rabbinowitsch E."/>
            <person name="Sanders M."/>
            <person name="Simmonds M."/>
            <person name="Whitehead S."/>
            <person name="Parkhill J."/>
        </authorList>
    </citation>
    <scope>NUCLEOTIDE SEQUENCE [LARGE SCALE GENOMIC DNA]</scope>
    <source>
        <strain>DSM 114642 / LMG 32736 / 3841</strain>
    </source>
</reference>
<sequence>MENLLSTVNAILITGPTASGKSALAVELAKRHDGAVVNADSMQVYDTLRVLTARPSKEEMQGVPHHLYGHVPAGAAYSTGAWLRDVSALLPALRDAGRLPVFVGGTGLYFKALTGGLSDMPEIPETLREKLRTRLLQEGPDGLHAELAVADPAMAASLNRQDGQRIVRALEVMKATGRSIADFQGRSGPVIIDAAEARKIVVLPDRAVLHQRINGRFEKMLQQGAEDEVRALLALDMPAEAPVMKAIGVSQIVAMLRGEMTRGEVLEKGAAATRQYAKRQMTWFRNQMDDSWERLTV</sequence>
<name>MIAA_RHIJ3</name>
<organism>
    <name type="scientific">Rhizobium johnstonii (strain DSM 114642 / LMG 32736 / 3841)</name>
    <name type="common">Rhizobium leguminosarum bv. viciae</name>
    <dbReference type="NCBI Taxonomy" id="216596"/>
    <lineage>
        <taxon>Bacteria</taxon>
        <taxon>Pseudomonadati</taxon>
        <taxon>Pseudomonadota</taxon>
        <taxon>Alphaproteobacteria</taxon>
        <taxon>Hyphomicrobiales</taxon>
        <taxon>Rhizobiaceae</taxon>
        <taxon>Rhizobium/Agrobacterium group</taxon>
        <taxon>Rhizobium</taxon>
        <taxon>Rhizobium johnstonii</taxon>
    </lineage>
</organism>
<comment type="function">
    <text evidence="1">Catalyzes the transfer of a dimethylallyl group onto the adenine at position 37 in tRNAs that read codons beginning with uridine, leading to the formation of N6-(dimethylallyl)adenosine (i(6)A).</text>
</comment>
<comment type="catalytic activity">
    <reaction evidence="1">
        <text>adenosine(37) in tRNA + dimethylallyl diphosphate = N(6)-dimethylallyladenosine(37) in tRNA + diphosphate</text>
        <dbReference type="Rhea" id="RHEA:26482"/>
        <dbReference type="Rhea" id="RHEA-COMP:10162"/>
        <dbReference type="Rhea" id="RHEA-COMP:10375"/>
        <dbReference type="ChEBI" id="CHEBI:33019"/>
        <dbReference type="ChEBI" id="CHEBI:57623"/>
        <dbReference type="ChEBI" id="CHEBI:74411"/>
        <dbReference type="ChEBI" id="CHEBI:74415"/>
        <dbReference type="EC" id="2.5.1.75"/>
    </reaction>
</comment>
<comment type="cofactor">
    <cofactor evidence="1">
        <name>Mg(2+)</name>
        <dbReference type="ChEBI" id="CHEBI:18420"/>
    </cofactor>
</comment>
<comment type="subunit">
    <text evidence="1">Monomer.</text>
</comment>
<comment type="similarity">
    <text evidence="1">Belongs to the IPP transferase family.</text>
</comment>
<feature type="chain" id="PRO_0000377282" description="tRNA dimethylallyltransferase">
    <location>
        <begin position="1"/>
        <end position="297"/>
    </location>
</feature>
<feature type="region of interest" description="Interaction with substrate tRNA" evidence="1">
    <location>
        <begin position="40"/>
        <end position="43"/>
    </location>
</feature>
<feature type="region of interest" description="Interaction with substrate tRNA" evidence="1">
    <location>
        <begin position="164"/>
        <end position="168"/>
    </location>
</feature>
<feature type="binding site" evidence="1">
    <location>
        <begin position="15"/>
        <end position="22"/>
    </location>
    <ligand>
        <name>ATP</name>
        <dbReference type="ChEBI" id="CHEBI:30616"/>
    </ligand>
</feature>
<feature type="binding site" evidence="1">
    <location>
        <begin position="17"/>
        <end position="22"/>
    </location>
    <ligand>
        <name>substrate</name>
    </ligand>
</feature>
<feature type="site" description="Interaction with substrate tRNA" evidence="1">
    <location>
        <position position="106"/>
    </location>
</feature>
<feature type="site" description="Interaction with substrate tRNA" evidence="1">
    <location>
        <position position="128"/>
    </location>
</feature>
<evidence type="ECO:0000255" key="1">
    <source>
        <dbReference type="HAMAP-Rule" id="MF_00185"/>
    </source>
</evidence>
<accession>Q1ME89</accession>
<gene>
    <name evidence="1" type="primary">miaA</name>
    <name type="ordered locus">RL3249</name>
</gene>
<dbReference type="EC" id="2.5.1.75" evidence="1"/>
<dbReference type="EMBL" id="AM236080">
    <property type="protein sequence ID" value="CAK08737.1"/>
    <property type="molecule type" value="Genomic_DNA"/>
</dbReference>
<dbReference type="SMR" id="Q1ME89"/>
<dbReference type="EnsemblBacteria" id="CAK08737">
    <property type="protein sequence ID" value="CAK08737"/>
    <property type="gene ID" value="RL3249"/>
</dbReference>
<dbReference type="KEGG" id="rle:RL3249"/>
<dbReference type="eggNOG" id="COG0324">
    <property type="taxonomic scope" value="Bacteria"/>
</dbReference>
<dbReference type="HOGENOM" id="CLU_032616_0_1_5"/>
<dbReference type="Proteomes" id="UP000006575">
    <property type="component" value="Chromosome"/>
</dbReference>
<dbReference type="GO" id="GO:0005524">
    <property type="term" value="F:ATP binding"/>
    <property type="evidence" value="ECO:0007669"/>
    <property type="project" value="UniProtKB-UniRule"/>
</dbReference>
<dbReference type="GO" id="GO:0052381">
    <property type="term" value="F:tRNA dimethylallyltransferase activity"/>
    <property type="evidence" value="ECO:0007669"/>
    <property type="project" value="UniProtKB-UniRule"/>
</dbReference>
<dbReference type="GO" id="GO:0006400">
    <property type="term" value="P:tRNA modification"/>
    <property type="evidence" value="ECO:0007669"/>
    <property type="project" value="TreeGrafter"/>
</dbReference>
<dbReference type="Gene3D" id="1.10.20.140">
    <property type="match status" value="1"/>
</dbReference>
<dbReference type="Gene3D" id="1.10.287.890">
    <property type="entry name" value="Crystal structure of tRNA isopentenylpyrophosphate transferase (bh2366) domain"/>
    <property type="match status" value="1"/>
</dbReference>
<dbReference type="Gene3D" id="3.40.50.300">
    <property type="entry name" value="P-loop containing nucleotide triphosphate hydrolases"/>
    <property type="match status" value="1"/>
</dbReference>
<dbReference type="HAMAP" id="MF_00185">
    <property type="entry name" value="IPP_trans"/>
    <property type="match status" value="1"/>
</dbReference>
<dbReference type="InterPro" id="IPR039657">
    <property type="entry name" value="Dimethylallyltransferase"/>
</dbReference>
<dbReference type="InterPro" id="IPR018022">
    <property type="entry name" value="IPT"/>
</dbReference>
<dbReference type="InterPro" id="IPR027417">
    <property type="entry name" value="P-loop_NTPase"/>
</dbReference>
<dbReference type="NCBIfam" id="TIGR00174">
    <property type="entry name" value="miaA"/>
    <property type="match status" value="1"/>
</dbReference>
<dbReference type="PANTHER" id="PTHR11088">
    <property type="entry name" value="TRNA DIMETHYLALLYLTRANSFERASE"/>
    <property type="match status" value="1"/>
</dbReference>
<dbReference type="PANTHER" id="PTHR11088:SF60">
    <property type="entry name" value="TRNA DIMETHYLALLYLTRANSFERASE"/>
    <property type="match status" value="1"/>
</dbReference>
<dbReference type="Pfam" id="PF01715">
    <property type="entry name" value="IPPT"/>
    <property type="match status" value="1"/>
</dbReference>
<dbReference type="SUPFAM" id="SSF52540">
    <property type="entry name" value="P-loop containing nucleoside triphosphate hydrolases"/>
    <property type="match status" value="1"/>
</dbReference>
<protein>
    <recommendedName>
        <fullName evidence="1">tRNA dimethylallyltransferase</fullName>
        <ecNumber evidence="1">2.5.1.75</ecNumber>
    </recommendedName>
    <alternativeName>
        <fullName evidence="1">Dimethylallyl diphosphate:tRNA dimethylallyltransferase</fullName>
        <shortName evidence="1">DMAPP:tRNA dimethylallyltransferase</shortName>
        <shortName evidence="1">DMATase</shortName>
    </alternativeName>
    <alternativeName>
        <fullName evidence="1">Isopentenyl-diphosphate:tRNA isopentenyltransferase</fullName>
        <shortName evidence="1">IPP transferase</shortName>
        <shortName evidence="1">IPPT</shortName>
        <shortName evidence="1">IPTase</shortName>
    </alternativeName>
</protein>